<accession>Q9ZQH1</accession>
<accession>A2RVT7</accession>
<accession>Q0WPF4</accession>
<organism>
    <name type="scientific">Arabidopsis thaliana</name>
    <name type="common">Mouse-ear cress</name>
    <dbReference type="NCBI Taxonomy" id="3702"/>
    <lineage>
        <taxon>Eukaryota</taxon>
        <taxon>Viridiplantae</taxon>
        <taxon>Streptophyta</taxon>
        <taxon>Embryophyta</taxon>
        <taxon>Tracheophyta</taxon>
        <taxon>Spermatophyta</taxon>
        <taxon>Magnoliopsida</taxon>
        <taxon>eudicotyledons</taxon>
        <taxon>Gunneridae</taxon>
        <taxon>Pentapetalae</taxon>
        <taxon>rosids</taxon>
        <taxon>malvids</taxon>
        <taxon>Brassicales</taxon>
        <taxon>Brassicaceae</taxon>
        <taxon>Camelineae</taxon>
        <taxon>Arabidopsis</taxon>
    </lineage>
</organism>
<keyword id="KW-0106">Calcium</keyword>
<keyword id="KW-0479">Metal-binding</keyword>
<keyword id="KW-1185">Reference proteome</keyword>
<keyword id="KW-0677">Repeat</keyword>
<name>CML48_ARATH</name>
<comment type="function">
    <text evidence="1">Potential calcium sensor.</text>
</comment>
<comment type="caution">
    <text evidence="3">Although assigned as a calmodulin family member by Ref.5, it only contains EF-hand domains.</text>
</comment>
<comment type="sequence caution" evidence="3">
    <conflict type="erroneous gene model prediction">
        <sequence resource="EMBL-CDS" id="AAD15600"/>
    </conflict>
</comment>
<comment type="sequence caution" evidence="3">
    <conflict type="frameshift">
        <sequence resource="EMBL-CDS" id="BAF00995"/>
    </conflict>
</comment>
<sequence length="228" mass="26130">MSYSNAYAPSAPELPESFVQQQHDGESRYTYAYPSYQPTQQFSSYSGMFSPETHPEIVRSFESADRNRSGFLEESELRQALSLSGYDGISNRTIRLLLFIYKIPVDSLLRLGPKEYVELWNCLAQWRAIFNRYDRDRSGKMNSTQLRDAFYNLGCVLPTSVHQLIVSQFDDGTGKTVDLCFDSFLECGMIVKGLTEKFRENDPGYTGYATLSYDVFMLMVIPFIATYD</sequence>
<feature type="chain" id="PRO_0000342971" description="Probable calcium-binding protein CML48">
    <location>
        <begin position="1"/>
        <end position="228"/>
    </location>
</feature>
<feature type="domain" description="EF-hand 1" evidence="2">
    <location>
        <begin position="52"/>
        <end position="87"/>
    </location>
</feature>
<feature type="domain" description="EF-hand 2" evidence="2">
    <location>
        <begin position="121"/>
        <end position="156"/>
    </location>
</feature>
<feature type="binding site" evidence="2">
    <location>
        <position position="65"/>
    </location>
    <ligand>
        <name>Ca(2+)</name>
        <dbReference type="ChEBI" id="CHEBI:29108"/>
    </ligand>
</feature>
<feature type="binding site" evidence="2">
    <location>
        <position position="67"/>
    </location>
    <ligand>
        <name>Ca(2+)</name>
        <dbReference type="ChEBI" id="CHEBI:29108"/>
    </ligand>
</feature>
<feature type="binding site" evidence="2">
    <location>
        <position position="69"/>
    </location>
    <ligand>
        <name>Ca(2+)</name>
        <dbReference type="ChEBI" id="CHEBI:29108"/>
    </ligand>
</feature>
<feature type="binding site" evidence="2">
    <location>
        <position position="76"/>
    </location>
    <ligand>
        <name>Ca(2+)</name>
        <dbReference type="ChEBI" id="CHEBI:29108"/>
    </ligand>
</feature>
<proteinExistence type="evidence at transcript level"/>
<evidence type="ECO:0000250" key="1"/>
<evidence type="ECO:0000255" key="2">
    <source>
        <dbReference type="PROSITE-ProRule" id="PRU00448"/>
    </source>
</evidence>
<evidence type="ECO:0000305" key="3"/>
<reference key="1">
    <citation type="journal article" date="1999" name="Nature">
        <title>Sequence and analysis of chromosome 2 of the plant Arabidopsis thaliana.</title>
        <authorList>
            <person name="Lin X."/>
            <person name="Kaul S."/>
            <person name="Rounsley S.D."/>
            <person name="Shea T.P."/>
            <person name="Benito M.-I."/>
            <person name="Town C.D."/>
            <person name="Fujii C.Y."/>
            <person name="Mason T.M."/>
            <person name="Bowman C.L."/>
            <person name="Barnstead M.E."/>
            <person name="Feldblyum T.V."/>
            <person name="Buell C.R."/>
            <person name="Ketchum K.A."/>
            <person name="Lee J.J."/>
            <person name="Ronning C.M."/>
            <person name="Koo H.L."/>
            <person name="Moffat K.S."/>
            <person name="Cronin L.A."/>
            <person name="Shen M."/>
            <person name="Pai G."/>
            <person name="Van Aken S."/>
            <person name="Umayam L."/>
            <person name="Tallon L.J."/>
            <person name="Gill J.E."/>
            <person name="Adams M.D."/>
            <person name="Carrera A.J."/>
            <person name="Creasy T.H."/>
            <person name="Goodman H.M."/>
            <person name="Somerville C.R."/>
            <person name="Copenhaver G.P."/>
            <person name="Preuss D."/>
            <person name="Nierman W.C."/>
            <person name="White O."/>
            <person name="Eisen J.A."/>
            <person name="Salzberg S.L."/>
            <person name="Fraser C.M."/>
            <person name="Venter J.C."/>
        </authorList>
    </citation>
    <scope>NUCLEOTIDE SEQUENCE [LARGE SCALE GENOMIC DNA]</scope>
    <source>
        <strain>cv. Columbia</strain>
    </source>
</reference>
<reference key="2">
    <citation type="journal article" date="2017" name="Plant J.">
        <title>Araport11: a complete reannotation of the Arabidopsis thaliana reference genome.</title>
        <authorList>
            <person name="Cheng C.Y."/>
            <person name="Krishnakumar V."/>
            <person name="Chan A.P."/>
            <person name="Thibaud-Nissen F."/>
            <person name="Schobel S."/>
            <person name="Town C.D."/>
        </authorList>
    </citation>
    <scope>GENOME REANNOTATION</scope>
    <source>
        <strain>cv. Columbia</strain>
    </source>
</reference>
<reference key="3">
    <citation type="submission" date="2006-07" db="EMBL/GenBank/DDBJ databases">
        <title>Large-scale analysis of RIKEN Arabidopsis full-length (RAFL) cDNAs.</title>
        <authorList>
            <person name="Totoki Y."/>
            <person name="Seki M."/>
            <person name="Ishida J."/>
            <person name="Nakajima M."/>
            <person name="Enju A."/>
            <person name="Kamiya A."/>
            <person name="Narusaka M."/>
            <person name="Shin-i T."/>
            <person name="Nakagawa M."/>
            <person name="Sakamoto N."/>
            <person name="Oishi K."/>
            <person name="Kohara Y."/>
            <person name="Kobayashi M."/>
            <person name="Toyoda A."/>
            <person name="Sakaki Y."/>
            <person name="Sakurai T."/>
            <person name="Iida K."/>
            <person name="Akiyama K."/>
            <person name="Satou M."/>
            <person name="Toyoda T."/>
            <person name="Konagaya A."/>
            <person name="Carninci P."/>
            <person name="Kawai J."/>
            <person name="Hayashizaki Y."/>
            <person name="Shinozaki K."/>
        </authorList>
    </citation>
    <scope>NUCLEOTIDE SEQUENCE [LARGE SCALE MRNA]</scope>
    <source>
        <strain>cv. Columbia</strain>
    </source>
</reference>
<reference key="4">
    <citation type="submission" date="2007-01" db="EMBL/GenBank/DDBJ databases">
        <title>Arabidopsis ORF clones.</title>
        <authorList>
            <person name="Kim C.J."/>
            <person name="Bautista V.R."/>
            <person name="Chen H."/>
            <person name="De Los Reyes C."/>
            <person name="Wu S.Y."/>
            <person name="Ecker J.R."/>
        </authorList>
    </citation>
    <scope>NUCLEOTIDE SEQUENCE [LARGE SCALE MRNA] OF 48-228</scope>
    <source>
        <strain>cv. Columbia</strain>
    </source>
</reference>
<reference key="5">
    <citation type="journal article" date="2003" name="New Phytol.">
        <title>Calmodulins and related potential calcium sensors of Arabidopsis.</title>
        <authorList>
            <person name="McCormack E."/>
            <person name="Braam J."/>
        </authorList>
    </citation>
    <scope>GENE FAMILY</scope>
    <scope>NOMENCLATURE</scope>
</reference>
<protein>
    <recommendedName>
        <fullName>Probable calcium-binding protein CML48</fullName>
    </recommendedName>
    <alternativeName>
        <fullName>Calmodulin-like protein 48</fullName>
    </alternativeName>
</protein>
<dbReference type="EMBL" id="AC006232">
    <property type="protein sequence ID" value="AAD15600.1"/>
    <property type="status" value="ALT_SEQ"/>
    <property type="molecule type" value="Genomic_DNA"/>
</dbReference>
<dbReference type="EMBL" id="CP002685">
    <property type="protein sequence ID" value="AEC08001.1"/>
    <property type="molecule type" value="Genomic_DNA"/>
</dbReference>
<dbReference type="EMBL" id="AK229120">
    <property type="protein sequence ID" value="BAF00995.1"/>
    <property type="status" value="ALT_FRAME"/>
    <property type="molecule type" value="mRNA"/>
</dbReference>
<dbReference type="EMBL" id="BT030078">
    <property type="protein sequence ID" value="ABN04816.1"/>
    <property type="molecule type" value="mRNA"/>
</dbReference>
<dbReference type="PIR" id="D84673">
    <property type="entry name" value="D84673"/>
</dbReference>
<dbReference type="RefSeq" id="NP_180317.3">
    <property type="nucleotide sequence ID" value="NM_128308.6"/>
</dbReference>
<dbReference type="SMR" id="Q9ZQH1"/>
<dbReference type="BioGRID" id="2645">
    <property type="interactions" value="1"/>
</dbReference>
<dbReference type="FunCoup" id="Q9ZQH1">
    <property type="interactions" value="2929"/>
</dbReference>
<dbReference type="IntAct" id="Q9ZQH1">
    <property type="interactions" value="1"/>
</dbReference>
<dbReference type="STRING" id="3702.Q9ZQH1"/>
<dbReference type="PaxDb" id="3702-AT2G27480.1"/>
<dbReference type="EnsemblPlants" id="AT2G27480.1">
    <property type="protein sequence ID" value="AT2G27480.1"/>
    <property type="gene ID" value="AT2G27480"/>
</dbReference>
<dbReference type="GeneID" id="817293"/>
<dbReference type="Gramene" id="AT2G27480.1">
    <property type="protein sequence ID" value="AT2G27480.1"/>
    <property type="gene ID" value="AT2G27480"/>
</dbReference>
<dbReference type="KEGG" id="ath:AT2G27480"/>
<dbReference type="Araport" id="AT2G27480"/>
<dbReference type="TAIR" id="AT2G27480"/>
<dbReference type="eggNOG" id="KOG0037">
    <property type="taxonomic scope" value="Eukaryota"/>
</dbReference>
<dbReference type="HOGENOM" id="CLU_051357_3_1_1"/>
<dbReference type="InParanoid" id="Q9ZQH1"/>
<dbReference type="OMA" id="RDTDQTG"/>
<dbReference type="PhylomeDB" id="Q9ZQH1"/>
<dbReference type="PRO" id="PR:Q9ZQH1"/>
<dbReference type="Proteomes" id="UP000006548">
    <property type="component" value="Chromosome 2"/>
</dbReference>
<dbReference type="ExpressionAtlas" id="Q9ZQH1">
    <property type="expression patterns" value="baseline and differential"/>
</dbReference>
<dbReference type="GO" id="GO:0005509">
    <property type="term" value="F:calcium ion binding"/>
    <property type="evidence" value="ECO:0007669"/>
    <property type="project" value="InterPro"/>
</dbReference>
<dbReference type="CDD" id="cd16180">
    <property type="entry name" value="EFh_PEF_Group_I"/>
    <property type="match status" value="1"/>
</dbReference>
<dbReference type="Gene3D" id="1.10.238.10">
    <property type="entry name" value="EF-hand"/>
    <property type="match status" value="1"/>
</dbReference>
<dbReference type="InterPro" id="IPR044590">
    <property type="entry name" value="CML48/49/50"/>
</dbReference>
<dbReference type="InterPro" id="IPR011992">
    <property type="entry name" value="EF-hand-dom_pair"/>
</dbReference>
<dbReference type="InterPro" id="IPR018247">
    <property type="entry name" value="EF_Hand_1_Ca_BS"/>
</dbReference>
<dbReference type="InterPro" id="IPR002048">
    <property type="entry name" value="EF_hand_dom"/>
</dbReference>
<dbReference type="PANTHER" id="PTHR46824">
    <property type="entry name" value="CALCIUM-BINDING PROTEIN CML48-RELATED"/>
    <property type="match status" value="1"/>
</dbReference>
<dbReference type="PANTHER" id="PTHR46824:SF2">
    <property type="entry name" value="CALCIUM-BINDING PROTEIN CML48-RELATED"/>
    <property type="match status" value="1"/>
</dbReference>
<dbReference type="Pfam" id="PF13202">
    <property type="entry name" value="EF-hand_5"/>
    <property type="match status" value="1"/>
</dbReference>
<dbReference type="Pfam" id="PF13405">
    <property type="entry name" value="EF-hand_6"/>
    <property type="match status" value="1"/>
</dbReference>
<dbReference type="SMART" id="SM00054">
    <property type="entry name" value="EFh"/>
    <property type="match status" value="2"/>
</dbReference>
<dbReference type="SUPFAM" id="SSF47473">
    <property type="entry name" value="EF-hand"/>
    <property type="match status" value="1"/>
</dbReference>
<dbReference type="PROSITE" id="PS00018">
    <property type="entry name" value="EF_HAND_1"/>
    <property type="match status" value="1"/>
</dbReference>
<dbReference type="PROSITE" id="PS50222">
    <property type="entry name" value="EF_HAND_2"/>
    <property type="match status" value="2"/>
</dbReference>
<gene>
    <name type="primary">CML48</name>
    <name type="ordered locus">At2g27480</name>
    <name type="ORF">F10A12.16</name>
</gene>